<gene>
    <name type="primary">RAD54</name>
    <name type="ordered locus">YGL163C</name>
    <name type="ORF">G1821</name>
</gene>
<protein>
    <recommendedName>
        <fullName>DNA repair and recombination protein RAD54</fullName>
        <ecNumber evidence="8">3.6.4.12</ecNumber>
    </recommendedName>
</protein>
<feature type="chain" id="PRO_0000074344" description="DNA repair and recombination protein RAD54">
    <location>
        <begin position="1"/>
        <end position="898"/>
    </location>
</feature>
<feature type="domain" description="Helicase ATP-binding" evidence="3">
    <location>
        <begin position="322"/>
        <end position="504"/>
    </location>
</feature>
<feature type="domain" description="Helicase C-terminal" evidence="4">
    <location>
        <begin position="659"/>
        <end position="812"/>
    </location>
</feature>
<feature type="region of interest" description="Disordered" evidence="5">
    <location>
        <begin position="1"/>
        <end position="22"/>
    </location>
</feature>
<feature type="region of interest" description="Disordered" evidence="5">
    <location>
        <begin position="188"/>
        <end position="238"/>
    </location>
</feature>
<feature type="region of interest" description="Disordered" evidence="5">
    <location>
        <begin position="302"/>
        <end position="321"/>
    </location>
</feature>
<feature type="short sequence motif" description="Nuclear localization signal" evidence="2">
    <location>
        <begin position="21"/>
        <end position="25"/>
    </location>
</feature>
<feature type="short sequence motif" description="Nuclear localization signal" evidence="2">
    <location>
        <begin position="41"/>
        <end position="45"/>
    </location>
</feature>
<feature type="short sequence motif" description="DEGH box">
    <location>
        <begin position="455"/>
        <end position="458"/>
    </location>
</feature>
<feature type="compositionally biased region" description="Basic and acidic residues" evidence="5">
    <location>
        <begin position="188"/>
        <end position="220"/>
    </location>
</feature>
<feature type="compositionally biased region" description="Basic and acidic residues" evidence="5">
    <location>
        <begin position="306"/>
        <end position="315"/>
    </location>
</feature>
<feature type="binding site" evidence="3">
    <location>
        <begin position="335"/>
        <end position="342"/>
    </location>
    <ligand>
        <name>ATP</name>
        <dbReference type="ChEBI" id="CHEBI:30616"/>
    </ligand>
</feature>
<feature type="mutagenesis site" description="Complete loss of ability to support homology search." evidence="7 8">
    <original>K</original>
    <variation>R</variation>
    <location>
        <position position="341"/>
    </location>
</feature>
<dbReference type="EC" id="3.6.4.12" evidence="8"/>
<dbReference type="EMBL" id="M63232">
    <property type="protein sequence ID" value="AAA34949.1"/>
    <property type="molecule type" value="Genomic_DNA"/>
</dbReference>
<dbReference type="EMBL" id="Z48618">
    <property type="protein sequence ID" value="CAA88534.1"/>
    <property type="molecule type" value="Genomic_DNA"/>
</dbReference>
<dbReference type="EMBL" id="Z72685">
    <property type="protein sequence ID" value="CAA96875.1"/>
    <property type="molecule type" value="Genomic_DNA"/>
</dbReference>
<dbReference type="EMBL" id="BK006941">
    <property type="protein sequence ID" value="DAA07949.1"/>
    <property type="molecule type" value="Genomic_DNA"/>
</dbReference>
<dbReference type="PIR" id="JH0440">
    <property type="entry name" value="JH0440"/>
</dbReference>
<dbReference type="RefSeq" id="NP_011352.1">
    <property type="nucleotide sequence ID" value="NM_001181028.1"/>
</dbReference>
<dbReference type="PDB" id="9E6L">
    <property type="method" value="EM"/>
    <property type="resolution" value="3.30 A"/>
    <property type="chains" value="G/H/I/J/K=103-136"/>
</dbReference>
<dbReference type="PDBsum" id="9E6L"/>
<dbReference type="EMDB" id="EMD-47572"/>
<dbReference type="SMR" id="P32863"/>
<dbReference type="BioGRID" id="33090">
    <property type="interactions" value="312"/>
</dbReference>
<dbReference type="DIP" id="DIP-509N"/>
<dbReference type="FunCoup" id="P32863">
    <property type="interactions" value="699"/>
</dbReference>
<dbReference type="IntAct" id="P32863">
    <property type="interactions" value="29"/>
</dbReference>
<dbReference type="MINT" id="P32863"/>
<dbReference type="STRING" id="4932.YGL163C"/>
<dbReference type="iPTMnet" id="P32863"/>
<dbReference type="PaxDb" id="4932-YGL163C"/>
<dbReference type="PeptideAtlas" id="P32863"/>
<dbReference type="EnsemblFungi" id="YGL163C_mRNA">
    <property type="protein sequence ID" value="YGL163C"/>
    <property type="gene ID" value="YGL163C"/>
</dbReference>
<dbReference type="GeneID" id="852713"/>
<dbReference type="KEGG" id="sce:YGL163C"/>
<dbReference type="AGR" id="SGD:S000003131"/>
<dbReference type="SGD" id="S000003131">
    <property type="gene designation" value="RAD54"/>
</dbReference>
<dbReference type="VEuPathDB" id="FungiDB:YGL163C"/>
<dbReference type="eggNOG" id="KOG0390">
    <property type="taxonomic scope" value="Eukaryota"/>
</dbReference>
<dbReference type="GeneTree" id="ENSGT00940000156897"/>
<dbReference type="HOGENOM" id="CLU_000315_10_2_1"/>
<dbReference type="InParanoid" id="P32863"/>
<dbReference type="OMA" id="YTEHERM"/>
<dbReference type="OrthoDB" id="413460at2759"/>
<dbReference type="BioCyc" id="YEAST:G3O-30652-MONOMER"/>
<dbReference type="BioGRID-ORCS" id="852713">
    <property type="hits" value="4 hits in 10 CRISPR screens"/>
</dbReference>
<dbReference type="PRO" id="PR:P32863"/>
<dbReference type="Proteomes" id="UP000002311">
    <property type="component" value="Chromosome VII"/>
</dbReference>
<dbReference type="RNAct" id="P32863">
    <property type="molecule type" value="protein"/>
</dbReference>
<dbReference type="GO" id="GO:0005737">
    <property type="term" value="C:cytoplasm"/>
    <property type="evidence" value="ECO:0007005"/>
    <property type="project" value="SGD"/>
</dbReference>
<dbReference type="GO" id="GO:0005634">
    <property type="term" value="C:nucleus"/>
    <property type="evidence" value="ECO:0000315"/>
    <property type="project" value="SGD"/>
</dbReference>
<dbReference type="GO" id="GO:0005524">
    <property type="term" value="F:ATP binding"/>
    <property type="evidence" value="ECO:0007669"/>
    <property type="project" value="UniProtKB-KW"/>
</dbReference>
<dbReference type="GO" id="GO:0016887">
    <property type="term" value="F:ATP hydrolysis activity"/>
    <property type="evidence" value="ECO:0007669"/>
    <property type="project" value="RHEA"/>
</dbReference>
<dbReference type="GO" id="GO:0003677">
    <property type="term" value="F:DNA binding"/>
    <property type="evidence" value="ECO:0007669"/>
    <property type="project" value="UniProtKB-KW"/>
</dbReference>
<dbReference type="GO" id="GO:0015616">
    <property type="term" value="F:DNA translocase activity"/>
    <property type="evidence" value="ECO:0000314"/>
    <property type="project" value="SGD"/>
</dbReference>
<dbReference type="GO" id="GO:0004386">
    <property type="term" value="F:helicase activity"/>
    <property type="evidence" value="ECO:0007669"/>
    <property type="project" value="UniProtKB-KW"/>
</dbReference>
<dbReference type="GO" id="GO:0046872">
    <property type="term" value="F:metal ion binding"/>
    <property type="evidence" value="ECO:0007669"/>
    <property type="project" value="UniProtKB-KW"/>
</dbReference>
<dbReference type="GO" id="GO:0006338">
    <property type="term" value="P:chromatin remodeling"/>
    <property type="evidence" value="ECO:0000314"/>
    <property type="project" value="SGD"/>
</dbReference>
<dbReference type="GO" id="GO:0032392">
    <property type="term" value="P:DNA geometric change"/>
    <property type="evidence" value="ECO:0000314"/>
    <property type="project" value="SGD"/>
</dbReference>
<dbReference type="GO" id="GO:0045003">
    <property type="term" value="P:double-strand break repair via synthesis-dependent strand annealing"/>
    <property type="evidence" value="ECO:0000318"/>
    <property type="project" value="GO_Central"/>
</dbReference>
<dbReference type="GO" id="GO:0030491">
    <property type="term" value="P:heteroduplex formation"/>
    <property type="evidence" value="ECO:0000314"/>
    <property type="project" value="SGD"/>
</dbReference>
<dbReference type="GO" id="GO:0007131">
    <property type="term" value="P:reciprocal meiotic recombination"/>
    <property type="evidence" value="ECO:0000318"/>
    <property type="project" value="GO_Central"/>
</dbReference>
<dbReference type="GO" id="GO:0000722">
    <property type="term" value="P:telomere maintenance via recombination"/>
    <property type="evidence" value="ECO:0000315"/>
    <property type="project" value="SGD"/>
</dbReference>
<dbReference type="CDD" id="cd18067">
    <property type="entry name" value="DEXHc_RAD54A"/>
    <property type="match status" value="1"/>
</dbReference>
<dbReference type="CDD" id="cd18793">
    <property type="entry name" value="SF2_C_SNF"/>
    <property type="match status" value="1"/>
</dbReference>
<dbReference type="FunFam" id="3.40.50.300:FF:000332">
    <property type="entry name" value="DNA repair and recombination protein RAD54-like"/>
    <property type="match status" value="1"/>
</dbReference>
<dbReference type="Gene3D" id="3.40.50.300">
    <property type="entry name" value="P-loop containing nucleotide triphosphate hydrolases"/>
    <property type="match status" value="1"/>
</dbReference>
<dbReference type="Gene3D" id="1.20.120.850">
    <property type="entry name" value="SWI2/SNF2 ATPases, N-terminal domain"/>
    <property type="match status" value="1"/>
</dbReference>
<dbReference type="Gene3D" id="3.40.50.10810">
    <property type="entry name" value="Tandem AAA-ATPase domain"/>
    <property type="match status" value="1"/>
</dbReference>
<dbReference type="InterPro" id="IPR014001">
    <property type="entry name" value="Helicase_ATP-bd"/>
</dbReference>
<dbReference type="InterPro" id="IPR001650">
    <property type="entry name" value="Helicase_C-like"/>
</dbReference>
<dbReference type="InterPro" id="IPR027417">
    <property type="entry name" value="P-loop_NTPase"/>
</dbReference>
<dbReference type="InterPro" id="IPR013967">
    <property type="entry name" value="Rad54_N"/>
</dbReference>
<dbReference type="InterPro" id="IPR038718">
    <property type="entry name" value="SNF2-like_sf"/>
</dbReference>
<dbReference type="InterPro" id="IPR049730">
    <property type="entry name" value="SNF2/RAD54-like_C"/>
</dbReference>
<dbReference type="InterPro" id="IPR000330">
    <property type="entry name" value="SNF2_N"/>
</dbReference>
<dbReference type="InterPro" id="IPR050496">
    <property type="entry name" value="SNF2_RAD54_helicase_repair"/>
</dbReference>
<dbReference type="PANTHER" id="PTHR45629:SF7">
    <property type="entry name" value="DNA EXCISION REPAIR PROTEIN ERCC-6-RELATED"/>
    <property type="match status" value="1"/>
</dbReference>
<dbReference type="PANTHER" id="PTHR45629">
    <property type="entry name" value="SNF2/RAD54 FAMILY MEMBER"/>
    <property type="match status" value="1"/>
</dbReference>
<dbReference type="Pfam" id="PF00271">
    <property type="entry name" value="Helicase_C"/>
    <property type="match status" value="1"/>
</dbReference>
<dbReference type="Pfam" id="PF08658">
    <property type="entry name" value="Rad54_N"/>
    <property type="match status" value="1"/>
</dbReference>
<dbReference type="Pfam" id="PF00176">
    <property type="entry name" value="SNF2-rel_dom"/>
    <property type="match status" value="1"/>
</dbReference>
<dbReference type="SMART" id="SM00487">
    <property type="entry name" value="DEXDc"/>
    <property type="match status" value="1"/>
</dbReference>
<dbReference type="SMART" id="SM00490">
    <property type="entry name" value="HELICc"/>
    <property type="match status" value="1"/>
</dbReference>
<dbReference type="SUPFAM" id="SSF52540">
    <property type="entry name" value="P-loop containing nucleoside triphosphate hydrolases"/>
    <property type="match status" value="2"/>
</dbReference>
<dbReference type="PROSITE" id="PS51192">
    <property type="entry name" value="HELICASE_ATP_BIND_1"/>
    <property type="match status" value="1"/>
</dbReference>
<dbReference type="PROSITE" id="PS51194">
    <property type="entry name" value="HELICASE_CTER"/>
    <property type="match status" value="1"/>
</dbReference>
<accession>P32863</accession>
<accession>D6VTY8</accession>
<evidence type="ECO:0000250" key="1">
    <source>
        <dbReference type="UniProtKB" id="Q7ZV09"/>
    </source>
</evidence>
<evidence type="ECO:0000255" key="2"/>
<evidence type="ECO:0000255" key="3">
    <source>
        <dbReference type="PROSITE-ProRule" id="PRU00541"/>
    </source>
</evidence>
<evidence type="ECO:0000255" key="4">
    <source>
        <dbReference type="PROSITE-ProRule" id="PRU00542"/>
    </source>
</evidence>
<evidence type="ECO:0000256" key="5">
    <source>
        <dbReference type="SAM" id="MobiDB-lite"/>
    </source>
</evidence>
<evidence type="ECO:0000269" key="6">
    <source>
    </source>
</evidence>
<evidence type="ECO:0000269" key="7">
    <source>
    </source>
</evidence>
<evidence type="ECO:0000269" key="8">
    <source>
    </source>
</evidence>
<evidence type="ECO:0000269" key="9">
    <source>
    </source>
</evidence>
<evidence type="ECO:0000305" key="10"/>
<name>RAD54_YEAST</name>
<sequence>MARRRLPDRPPNGIGAGERPRLVPRPINVQDSVNRLTKPFRVPYKNTHIPPAAGRIATGSDNIVGGRSLRKRSATVCYSGLDINADEAEYNSQDISFSQLTKRRKDALSAQRLAKDPTRLSHIQYTLRRSFTVPIKGYVQRHSLPLTLGMKKKITPEPRPLHDPTDEFAIVLYDPSVDGEMIVHDTSMDNKEEESKKMIKSTQEKDNINKEKNSQEERPTQRIGRHPALMTNGVRNKPLRELLGDSENSAENKKKFASVPVVIDPKLAKILRPHQVEGVRFLYRCVTGLVMKDYLEAEAFNTSSEDPLKSDEKALTESQKTEQNNRGAYGCIMADEMGLGKTLQCIALMWTLLRQGPQGKRLIDKCIIVCPSSLVNNWANELIKWLGPNTLTPLAVDGKKSSMGGGNTTVSQAIHAWAQAQGRNIVKPVLIISYETLRRNVDQLKNCNVGLMLADEGHRLKNGDSLTFTALDSISCPRRVILSGTPIQNDLSEYFALLSFSNPGLLGSRAEFRKNFENPILRGRDADATDKEITKGEAQLQKLSTIVSKFIIRRTNDILAKYLPCKYEHVIFVNLKPLQNELYNKLIKSREVKKVVKGVGGSQPLRAIGILKKLCNHPNLLNFEDEFDDEDDLELPDDYNMPGSKARDVQTKYSAKFSILERFLHKIKTESDDKIVLISNYTQTLDLIEKMCRYKHYSAVRLDGTMSINKRQKLVDRFNDPEGQEFIFLLSSKAGGCGINLIGANRLILMDPDWNPAADQQALARVWRDGQKKDCFIYRFISTGTIEEKIFQRQSMKMSLSSCVVDAKEDVERLFSSDNLRQLFQKNENTICETHETYHCKRCNAQGKQLKRAPAMLYGDATTWNHLNHDALEKTNDHLLKNEHHYNDISFAFQYISH</sequence>
<reference key="1">
    <citation type="journal article" date="1991" name="Gene">
        <title>Sequence of RAD54, a Saccharomyces cerevisiae gene involved in recombination and repair.</title>
        <authorList>
            <person name="Emery H.S."/>
            <person name="Schild D."/>
            <person name="Kellogg D.E."/>
            <person name="Mortimer R.K."/>
        </authorList>
    </citation>
    <scope>NUCLEOTIDE SEQUENCE [GENOMIC DNA]</scope>
</reference>
<reference key="2">
    <citation type="journal article" date="1995" name="Yeast">
        <title>DNA sequence analysis of a 35 kb segment from Saccharomyces cerevisiae chromosome VII reveals 19 open reading frames including RAD54, ACE1/CUP2, PMR1, RCK1, AMS1 and CAL1/CDC43.</title>
        <authorList>
            <person name="James C.M."/>
            <person name="Indge K.J."/>
            <person name="Oliver S.G."/>
        </authorList>
    </citation>
    <scope>NUCLEOTIDE SEQUENCE [GENOMIC DNA]</scope>
</reference>
<reference key="3">
    <citation type="journal article" date="1997" name="Nature">
        <title>The nucleotide sequence of Saccharomyces cerevisiae chromosome VII.</title>
        <authorList>
            <person name="Tettelin H."/>
            <person name="Agostoni-Carbone M.L."/>
            <person name="Albermann K."/>
            <person name="Albers M."/>
            <person name="Arroyo J."/>
            <person name="Backes U."/>
            <person name="Barreiros T."/>
            <person name="Bertani I."/>
            <person name="Bjourson A.J."/>
            <person name="Brueckner M."/>
            <person name="Bruschi C.V."/>
            <person name="Carignani G."/>
            <person name="Castagnoli L."/>
            <person name="Cerdan E."/>
            <person name="Clemente M.L."/>
            <person name="Coblenz A."/>
            <person name="Coglievina M."/>
            <person name="Coissac E."/>
            <person name="Defoor E."/>
            <person name="Del Bino S."/>
            <person name="Delius H."/>
            <person name="Delneri D."/>
            <person name="de Wergifosse P."/>
            <person name="Dujon B."/>
            <person name="Durand P."/>
            <person name="Entian K.-D."/>
            <person name="Eraso P."/>
            <person name="Escribano V."/>
            <person name="Fabiani L."/>
            <person name="Fartmann B."/>
            <person name="Feroli F."/>
            <person name="Feuermann M."/>
            <person name="Frontali L."/>
            <person name="Garcia-Gonzalez M."/>
            <person name="Garcia-Saez M.I."/>
            <person name="Goffeau A."/>
            <person name="Guerreiro P."/>
            <person name="Hani J."/>
            <person name="Hansen M."/>
            <person name="Hebling U."/>
            <person name="Hernandez K."/>
            <person name="Heumann K."/>
            <person name="Hilger F."/>
            <person name="Hofmann B."/>
            <person name="Indge K.J."/>
            <person name="James C.M."/>
            <person name="Klima R."/>
            <person name="Koetter P."/>
            <person name="Kramer B."/>
            <person name="Kramer W."/>
            <person name="Lauquin G."/>
            <person name="Leuther H."/>
            <person name="Louis E.J."/>
            <person name="Maillier E."/>
            <person name="Marconi A."/>
            <person name="Martegani E."/>
            <person name="Mazon M.J."/>
            <person name="Mazzoni C."/>
            <person name="McReynolds A.D.K."/>
            <person name="Melchioretto P."/>
            <person name="Mewes H.-W."/>
            <person name="Minenkova O."/>
            <person name="Mueller-Auer S."/>
            <person name="Nawrocki A."/>
            <person name="Netter P."/>
            <person name="Neu R."/>
            <person name="Nombela C."/>
            <person name="Oliver S.G."/>
            <person name="Panzeri L."/>
            <person name="Paoluzi S."/>
            <person name="Plevani P."/>
            <person name="Portetelle D."/>
            <person name="Portillo F."/>
            <person name="Potier S."/>
            <person name="Purnelle B."/>
            <person name="Rieger M."/>
            <person name="Riles L."/>
            <person name="Rinaldi T."/>
            <person name="Robben J."/>
            <person name="Rodrigues-Pousada C."/>
            <person name="Rodriguez-Belmonte E."/>
            <person name="Rodriguez-Torres A.M."/>
            <person name="Rose M."/>
            <person name="Ruzzi M."/>
            <person name="Saliola M."/>
            <person name="Sanchez-Perez M."/>
            <person name="Schaefer B."/>
            <person name="Schaefer M."/>
            <person name="Scharfe M."/>
            <person name="Schmidheini T."/>
            <person name="Schreer A."/>
            <person name="Skala J."/>
            <person name="Souciet J.-L."/>
            <person name="Steensma H.Y."/>
            <person name="Talla E."/>
            <person name="Thierry A."/>
            <person name="Vandenbol M."/>
            <person name="van der Aart Q.J.M."/>
            <person name="Van Dyck L."/>
            <person name="Vanoni M."/>
            <person name="Verhasselt P."/>
            <person name="Voet M."/>
            <person name="Volckaert G."/>
            <person name="Wambutt R."/>
            <person name="Watson M.D."/>
            <person name="Weber N."/>
            <person name="Wedler E."/>
            <person name="Wedler H."/>
            <person name="Wipfli P."/>
            <person name="Wolf K."/>
            <person name="Wright L.F."/>
            <person name="Zaccaria P."/>
            <person name="Zimmermann M."/>
            <person name="Zollner A."/>
            <person name="Kleine K."/>
        </authorList>
    </citation>
    <scope>NUCLEOTIDE SEQUENCE [LARGE SCALE GENOMIC DNA]</scope>
    <source>
        <strain>ATCC 204508 / S288c</strain>
    </source>
</reference>
<reference key="4">
    <citation type="journal article" date="2014" name="G3 (Bethesda)">
        <title>The reference genome sequence of Saccharomyces cerevisiae: Then and now.</title>
        <authorList>
            <person name="Engel S.R."/>
            <person name="Dietrich F.S."/>
            <person name="Fisk D.G."/>
            <person name="Binkley G."/>
            <person name="Balakrishnan R."/>
            <person name="Costanzo M.C."/>
            <person name="Dwight S.S."/>
            <person name="Hitz B.C."/>
            <person name="Karra K."/>
            <person name="Nash R.S."/>
            <person name="Weng S."/>
            <person name="Wong E.D."/>
            <person name="Lloyd P."/>
            <person name="Skrzypek M.S."/>
            <person name="Miyasato S.R."/>
            <person name="Simison M."/>
            <person name="Cherry J.M."/>
        </authorList>
    </citation>
    <scope>GENOME REANNOTATION</scope>
    <source>
        <strain>ATCC 204508 / S288c</strain>
    </source>
</reference>
<reference key="5">
    <citation type="journal article" date="1995" name="Nucleic Acids Res.">
        <title>The DNA repair genes RAD54 and UNG1 are cell cycle regulated in budding yeast but MCB promoter elements have no essential role in the DNA damage response.</title>
        <authorList>
            <person name="Johnston L.H."/>
            <person name="Johnson A.L."/>
        </authorList>
    </citation>
    <scope>CELL CYCLE REGULATION</scope>
</reference>
<reference key="6">
    <citation type="journal article" date="1998" name="Nature">
        <title>Catalysis of homologous DNA pairing by yeast Rad51 and Rad54 proteins.</title>
        <authorList>
            <person name="Petukhova G."/>
            <person name="Stratton S."/>
            <person name="Sung P."/>
        </authorList>
    </citation>
    <scope>INTERACTION WITH RAD51</scope>
</reference>
<reference key="7">
    <citation type="journal article" date="2002" name="Mol. Cell">
        <title>Rad54, a Swi2/Snf2-like recombinational repair protein, disassembles Rad51:dsDNA filaments.</title>
        <authorList>
            <person name="Solinger J.A."/>
            <person name="Kiianitsa K."/>
            <person name="Heyer W.-D."/>
        </authorList>
    </citation>
    <scope>FUNCTION</scope>
</reference>
<reference key="8">
    <citation type="journal article" date="2008" name="Mol. Cell. Proteomics">
        <title>A multidimensional chromatography technology for in-depth phosphoproteome analysis.</title>
        <authorList>
            <person name="Albuquerque C.P."/>
            <person name="Smolka M.B."/>
            <person name="Payne S.H."/>
            <person name="Bafna V."/>
            <person name="Eng J."/>
            <person name="Zhou H."/>
        </authorList>
    </citation>
    <scope>IDENTIFICATION BY MASS SPECTROMETRY [LARGE SCALE ANALYSIS]</scope>
</reference>
<reference key="9">
    <citation type="journal article" date="2019" name="Nat. Commun.">
        <title>In vitro role of Rad54 in Rad51-ssDNA filament-dependent homology search and synaptic complexes formation.</title>
        <authorList>
            <person name="Tavares E.M."/>
            <person name="Wright W.D."/>
            <person name="Heyer W.D."/>
            <person name="Le Cam E."/>
            <person name="Dupaigne P."/>
        </authorList>
    </citation>
    <scope>FUNCTION</scope>
    <scope>MUTAGENESIS OF LYS-341</scope>
    <scope>INTERACTION WITH RAD51</scope>
</reference>
<reference key="10">
    <citation type="journal article" date="2020" name="Cell">
        <title>Rad54 Drives ATP Hydrolysis-Dependent DNA Sequence Alignment during Homologous Recombination.</title>
        <authorList>
            <person name="Crickard J.B."/>
            <person name="Moevus C.J."/>
            <person name="Kwon Y."/>
            <person name="Sung P."/>
            <person name="Greene E.C."/>
        </authorList>
    </citation>
    <scope>FUNCTION</scope>
    <scope>MUTAGENESIS OF LYS-341</scope>
    <scope>CATALYTIC ACTIVITY</scope>
</reference>
<keyword id="KW-0002">3D-structure</keyword>
<keyword id="KW-0067">ATP-binding</keyword>
<keyword id="KW-0227">DNA damage</keyword>
<keyword id="KW-0234">DNA repair</keyword>
<keyword id="KW-0238">DNA-binding</keyword>
<keyword id="KW-0347">Helicase</keyword>
<keyword id="KW-0378">Hydrolase</keyword>
<keyword id="KW-0479">Metal-binding</keyword>
<keyword id="KW-0547">Nucleotide-binding</keyword>
<keyword id="KW-0539">Nucleus</keyword>
<keyword id="KW-0597">Phosphoprotein</keyword>
<keyword id="KW-1185">Reference proteome</keyword>
<keyword id="KW-0862">Zinc</keyword>
<organism>
    <name type="scientific">Saccharomyces cerevisiae (strain ATCC 204508 / S288c)</name>
    <name type="common">Baker's yeast</name>
    <dbReference type="NCBI Taxonomy" id="559292"/>
    <lineage>
        <taxon>Eukaryota</taxon>
        <taxon>Fungi</taxon>
        <taxon>Dikarya</taxon>
        <taxon>Ascomycota</taxon>
        <taxon>Saccharomycotina</taxon>
        <taxon>Saccharomycetes</taxon>
        <taxon>Saccharomycetales</taxon>
        <taxon>Saccharomycetaceae</taxon>
        <taxon>Saccharomyces</taxon>
    </lineage>
</organism>
<proteinExistence type="evidence at protein level"/>
<comment type="function">
    <text evidence="6 7 8">Plays an essential role in homologous recombination (HR) which is a major pathway for repairing DNA double-strand breaks (DSBs), single-stranded DNA (ssDNA) gaps, and stalled or collapsed replication forks (PubMed:12453424). Acts as a molecular motor during the homology search and guides RAD51 ssDNA along a donor dsDNA thereby changing the homology search from the diffusion-based mechanism to a motor-guided mechanism (PubMed:32502392). Also plays an essential role in RAD51-mediated synaptic complex formation which consists of three strands encased in a protein filament formed once homology is recognized (PubMed:31492866). Once DNA strand exchange occured, dissociates RAD51 from nucleoprotein filaments formed on dsDNA (PubMed:12453424).</text>
</comment>
<comment type="catalytic activity">
    <reaction evidence="8">
        <text>ATP + H2O = ADP + phosphate + H(+)</text>
        <dbReference type="Rhea" id="RHEA:13065"/>
        <dbReference type="ChEBI" id="CHEBI:15377"/>
        <dbReference type="ChEBI" id="CHEBI:15378"/>
        <dbReference type="ChEBI" id="CHEBI:30616"/>
        <dbReference type="ChEBI" id="CHEBI:43474"/>
        <dbReference type="ChEBI" id="CHEBI:456216"/>
        <dbReference type="EC" id="3.6.4.12"/>
    </reaction>
</comment>
<comment type="subunit">
    <text evidence="1 7 9">Homohexamer (By similarity). Interacts with RAD51; RAD51-ssDNA filaments do not interact autonomously with dsDNA but do so robustly in the presence of RAD54 (PubMed:31492866, PubMed:9590697).</text>
</comment>
<comment type="interaction">
    <interactant intactId="EBI-14728">
        <id>P32863</id>
    </interactant>
    <interactant intactId="EBI-14709">
        <id>P25454</id>
        <label>RAD51</label>
    </interactant>
    <organismsDiffer>false</organismsDiffer>
    <experiments>2</experiments>
</comment>
<comment type="subcellular location">
    <subcellularLocation>
        <location>Nucleus</location>
    </subcellularLocation>
</comment>
<comment type="induction">
    <text>Expression increases in late G1 phase compared to other phases of the cell cycle.</text>
</comment>
<comment type="similarity">
    <text evidence="10">Belongs to the SNF2/RAD54 helicase family.</text>
</comment>